<protein>
    <recommendedName>
        <fullName>Uncharacterized protein TP_0404</fullName>
    </recommendedName>
</protein>
<organism>
    <name type="scientific">Treponema pallidum (strain Nichols)</name>
    <dbReference type="NCBI Taxonomy" id="243276"/>
    <lineage>
        <taxon>Bacteria</taxon>
        <taxon>Pseudomonadati</taxon>
        <taxon>Spirochaetota</taxon>
        <taxon>Spirochaetia</taxon>
        <taxon>Spirochaetales</taxon>
        <taxon>Treponemataceae</taxon>
        <taxon>Treponema</taxon>
    </lineage>
</organism>
<feature type="chain" id="PRO_0000202248" description="Uncharacterized protein TP_0404">
    <location>
        <begin position="1"/>
        <end position="177"/>
    </location>
</feature>
<proteinExistence type="predicted"/>
<gene>
    <name type="ordered locus">TP_0404</name>
</gene>
<keyword id="KW-1185">Reference proteome</keyword>
<accession>O83419</accession>
<dbReference type="EMBL" id="AE000520">
    <property type="protein sequence ID" value="AAC65395.1"/>
    <property type="molecule type" value="Genomic_DNA"/>
</dbReference>
<dbReference type="PIR" id="C71329">
    <property type="entry name" value="C71329"/>
</dbReference>
<dbReference type="RefSeq" id="WP_010881852.1">
    <property type="nucleotide sequence ID" value="NC_021490.2"/>
</dbReference>
<dbReference type="SMR" id="O83419"/>
<dbReference type="IntAct" id="O83419">
    <property type="interactions" value="1"/>
</dbReference>
<dbReference type="STRING" id="243276.TP_0404"/>
<dbReference type="EnsemblBacteria" id="AAC65395">
    <property type="protein sequence ID" value="AAC65395"/>
    <property type="gene ID" value="TP_0404"/>
</dbReference>
<dbReference type="KEGG" id="tpa:TP_0404"/>
<dbReference type="KEGG" id="tpw:TPANIC_0404"/>
<dbReference type="eggNOG" id="COG0491">
    <property type="taxonomic scope" value="Bacteria"/>
</dbReference>
<dbReference type="HOGENOM" id="CLU_030571_5_4_12"/>
<dbReference type="OrthoDB" id="358818at2"/>
<dbReference type="Proteomes" id="UP000000811">
    <property type="component" value="Chromosome"/>
</dbReference>
<dbReference type="CDD" id="cd06262">
    <property type="entry name" value="metallo-hydrolase-like_MBL-fold"/>
    <property type="match status" value="1"/>
</dbReference>
<dbReference type="Gene3D" id="3.60.15.10">
    <property type="entry name" value="Ribonuclease Z/Hydroxyacylglutathione hydrolase-like"/>
    <property type="match status" value="1"/>
</dbReference>
<dbReference type="InterPro" id="IPR036866">
    <property type="entry name" value="RibonucZ/Hydroxyglut_hydro"/>
</dbReference>
<dbReference type="SUPFAM" id="SSF56281">
    <property type="entry name" value="Metallo-hydrolase/oxidoreductase"/>
    <property type="match status" value="1"/>
</dbReference>
<sequence>MKVYIHPAEQHTQRTSYLLCNLSLNEALLIDAGHVSTHLIHTIEKNSCTLTAVFLTRTDDATQAGVRTLLRVYSPHIFCGEKCWNAHESTLLQGDCSLNCAGFTVTCFASPAYGCYLYRIAHLAFTGDLCSAGYEEAGNEADTILERACTAHETLILFHGHGPPSSYTRARTQRASH</sequence>
<name>Y404_TREPA</name>
<reference key="1">
    <citation type="journal article" date="1998" name="Science">
        <title>Complete genome sequence of Treponema pallidum, the syphilis spirochete.</title>
        <authorList>
            <person name="Fraser C.M."/>
            <person name="Norris S.J."/>
            <person name="Weinstock G.M."/>
            <person name="White O."/>
            <person name="Sutton G.G."/>
            <person name="Dodson R.J."/>
            <person name="Gwinn M.L."/>
            <person name="Hickey E.K."/>
            <person name="Clayton R.A."/>
            <person name="Ketchum K.A."/>
            <person name="Sodergren E."/>
            <person name="Hardham J.M."/>
            <person name="McLeod M.P."/>
            <person name="Salzberg S.L."/>
            <person name="Peterson J.D."/>
            <person name="Khalak H.G."/>
            <person name="Richardson D.L."/>
            <person name="Howell J.K."/>
            <person name="Chidambaram M."/>
            <person name="Utterback T.R."/>
            <person name="McDonald L.A."/>
            <person name="Artiach P."/>
            <person name="Bowman C."/>
            <person name="Cotton M.D."/>
            <person name="Fujii C."/>
            <person name="Garland S.A."/>
            <person name="Hatch B."/>
            <person name="Horst K."/>
            <person name="Roberts K.M."/>
            <person name="Sandusky M."/>
            <person name="Weidman J.F."/>
            <person name="Smith H.O."/>
            <person name="Venter J.C."/>
        </authorList>
    </citation>
    <scope>NUCLEOTIDE SEQUENCE [LARGE SCALE GENOMIC DNA]</scope>
    <source>
        <strain>Nichols</strain>
    </source>
</reference>